<accession>Q8LGC6</accession>
<accession>Q9MAN9</accession>
<comment type="function">
    <text evidence="1">May promote appropriate targeting of ribosome-nascent polypeptide complexes.</text>
</comment>
<comment type="similarity">
    <text evidence="4">Belongs to the NAC-alpha family.</text>
</comment>
<feature type="chain" id="PRO_0000135591" description="Nascent polypeptide-associated complex subunit alpha-like protein 5">
    <location>
        <begin position="1"/>
        <end position="209"/>
    </location>
</feature>
<feature type="domain" description="NAC-A/B" evidence="2">
    <location>
        <begin position="62"/>
        <end position="127"/>
    </location>
</feature>
<feature type="domain" description="UBA">
    <location>
        <begin position="170"/>
        <end position="207"/>
    </location>
</feature>
<feature type="region of interest" description="Disordered" evidence="3">
    <location>
        <begin position="23"/>
        <end position="71"/>
    </location>
</feature>
<feature type="compositionally biased region" description="Acidic residues" evidence="3">
    <location>
        <begin position="25"/>
        <end position="54"/>
    </location>
</feature>
<feature type="sequence conflict" description="In Ref. 4; AAM60929." evidence="4" ref="4">
    <original>I</original>
    <variation>V</variation>
    <location>
        <position position="204"/>
    </location>
</feature>
<keyword id="KW-0653">Protein transport</keyword>
<keyword id="KW-1185">Reference proteome</keyword>
<keyword id="KW-0813">Transport</keyword>
<protein>
    <recommendedName>
        <fullName>Nascent polypeptide-associated complex subunit alpha-like protein 5</fullName>
        <shortName>NAC-alpha-like protein 5</shortName>
    </recommendedName>
    <alternativeName>
        <fullName>Alpha-NAC-like protein 5</fullName>
    </alternativeName>
</protein>
<reference key="1">
    <citation type="journal article" date="2000" name="Nature">
        <title>Sequence and analysis of chromosome 1 of the plant Arabidopsis thaliana.</title>
        <authorList>
            <person name="Theologis A."/>
            <person name="Ecker J.R."/>
            <person name="Palm C.J."/>
            <person name="Federspiel N.A."/>
            <person name="Kaul S."/>
            <person name="White O."/>
            <person name="Alonso J."/>
            <person name="Altafi H."/>
            <person name="Araujo R."/>
            <person name="Bowman C.L."/>
            <person name="Brooks S.Y."/>
            <person name="Buehler E."/>
            <person name="Chan A."/>
            <person name="Chao Q."/>
            <person name="Chen H."/>
            <person name="Cheuk R.F."/>
            <person name="Chin C.W."/>
            <person name="Chung M.K."/>
            <person name="Conn L."/>
            <person name="Conway A.B."/>
            <person name="Conway A.R."/>
            <person name="Creasy T.H."/>
            <person name="Dewar K."/>
            <person name="Dunn P."/>
            <person name="Etgu P."/>
            <person name="Feldblyum T.V."/>
            <person name="Feng J.-D."/>
            <person name="Fong B."/>
            <person name="Fujii C.Y."/>
            <person name="Gill J.E."/>
            <person name="Goldsmith A.D."/>
            <person name="Haas B."/>
            <person name="Hansen N.F."/>
            <person name="Hughes B."/>
            <person name="Huizar L."/>
            <person name="Hunter J.L."/>
            <person name="Jenkins J."/>
            <person name="Johnson-Hopson C."/>
            <person name="Khan S."/>
            <person name="Khaykin E."/>
            <person name="Kim C.J."/>
            <person name="Koo H.L."/>
            <person name="Kremenetskaia I."/>
            <person name="Kurtz D.B."/>
            <person name="Kwan A."/>
            <person name="Lam B."/>
            <person name="Langin-Hooper S."/>
            <person name="Lee A."/>
            <person name="Lee J.M."/>
            <person name="Lenz C.A."/>
            <person name="Li J.H."/>
            <person name="Li Y.-P."/>
            <person name="Lin X."/>
            <person name="Liu S.X."/>
            <person name="Liu Z.A."/>
            <person name="Luros J.S."/>
            <person name="Maiti R."/>
            <person name="Marziali A."/>
            <person name="Militscher J."/>
            <person name="Miranda M."/>
            <person name="Nguyen M."/>
            <person name="Nierman W.C."/>
            <person name="Osborne B.I."/>
            <person name="Pai G."/>
            <person name="Peterson J."/>
            <person name="Pham P.K."/>
            <person name="Rizzo M."/>
            <person name="Rooney T."/>
            <person name="Rowley D."/>
            <person name="Sakano H."/>
            <person name="Salzberg S.L."/>
            <person name="Schwartz J.R."/>
            <person name="Shinn P."/>
            <person name="Southwick A.M."/>
            <person name="Sun H."/>
            <person name="Tallon L.J."/>
            <person name="Tambunga G."/>
            <person name="Toriumi M.J."/>
            <person name="Town C.D."/>
            <person name="Utterback T."/>
            <person name="Van Aken S."/>
            <person name="Vaysberg M."/>
            <person name="Vysotskaia V.S."/>
            <person name="Walker M."/>
            <person name="Wu D."/>
            <person name="Yu G."/>
            <person name="Fraser C.M."/>
            <person name="Venter J.C."/>
            <person name="Davis R.W."/>
        </authorList>
    </citation>
    <scope>NUCLEOTIDE SEQUENCE [LARGE SCALE GENOMIC DNA]</scope>
    <source>
        <strain>cv. Columbia</strain>
    </source>
</reference>
<reference key="2">
    <citation type="journal article" date="2017" name="Plant J.">
        <title>Araport11: a complete reannotation of the Arabidopsis thaliana reference genome.</title>
        <authorList>
            <person name="Cheng C.Y."/>
            <person name="Krishnakumar V."/>
            <person name="Chan A.P."/>
            <person name="Thibaud-Nissen F."/>
            <person name="Schobel S."/>
            <person name="Town C.D."/>
        </authorList>
    </citation>
    <scope>GENOME REANNOTATION</scope>
    <source>
        <strain>cv. Columbia</strain>
    </source>
</reference>
<reference key="3">
    <citation type="journal article" date="2003" name="Science">
        <title>Empirical analysis of transcriptional activity in the Arabidopsis genome.</title>
        <authorList>
            <person name="Yamada K."/>
            <person name="Lim J."/>
            <person name="Dale J.M."/>
            <person name="Chen H."/>
            <person name="Shinn P."/>
            <person name="Palm C.J."/>
            <person name="Southwick A.M."/>
            <person name="Wu H.C."/>
            <person name="Kim C.J."/>
            <person name="Nguyen M."/>
            <person name="Pham P.K."/>
            <person name="Cheuk R.F."/>
            <person name="Karlin-Newmann G."/>
            <person name="Liu S.X."/>
            <person name="Lam B."/>
            <person name="Sakano H."/>
            <person name="Wu T."/>
            <person name="Yu G."/>
            <person name="Miranda M."/>
            <person name="Quach H.L."/>
            <person name="Tripp M."/>
            <person name="Chang C.H."/>
            <person name="Lee J.M."/>
            <person name="Toriumi M.J."/>
            <person name="Chan M.M."/>
            <person name="Tang C.C."/>
            <person name="Onodera C.S."/>
            <person name="Deng J.M."/>
            <person name="Akiyama K."/>
            <person name="Ansari Y."/>
            <person name="Arakawa T."/>
            <person name="Banh J."/>
            <person name="Banno F."/>
            <person name="Bowser L."/>
            <person name="Brooks S.Y."/>
            <person name="Carninci P."/>
            <person name="Chao Q."/>
            <person name="Choy N."/>
            <person name="Enju A."/>
            <person name="Goldsmith A.D."/>
            <person name="Gurjal M."/>
            <person name="Hansen N.F."/>
            <person name="Hayashizaki Y."/>
            <person name="Johnson-Hopson C."/>
            <person name="Hsuan V.W."/>
            <person name="Iida K."/>
            <person name="Karnes M."/>
            <person name="Khan S."/>
            <person name="Koesema E."/>
            <person name="Ishida J."/>
            <person name="Jiang P.X."/>
            <person name="Jones T."/>
            <person name="Kawai J."/>
            <person name="Kamiya A."/>
            <person name="Meyers C."/>
            <person name="Nakajima M."/>
            <person name="Narusaka M."/>
            <person name="Seki M."/>
            <person name="Sakurai T."/>
            <person name="Satou M."/>
            <person name="Tamse R."/>
            <person name="Vaysberg M."/>
            <person name="Wallender E.K."/>
            <person name="Wong C."/>
            <person name="Yamamura Y."/>
            <person name="Yuan S."/>
            <person name="Shinozaki K."/>
            <person name="Davis R.W."/>
            <person name="Theologis A."/>
            <person name="Ecker J.R."/>
        </authorList>
    </citation>
    <scope>NUCLEOTIDE SEQUENCE [LARGE SCALE MRNA]</scope>
    <source>
        <strain>cv. Columbia</strain>
    </source>
</reference>
<reference key="4">
    <citation type="submission" date="2002-03" db="EMBL/GenBank/DDBJ databases">
        <title>Full-length cDNA from Arabidopsis thaliana.</title>
        <authorList>
            <person name="Brover V.V."/>
            <person name="Troukhan M.E."/>
            <person name="Alexandrov N.A."/>
            <person name="Lu Y.-P."/>
            <person name="Flavell R.B."/>
            <person name="Feldmann K.A."/>
        </authorList>
    </citation>
    <scope>NUCLEOTIDE SEQUENCE [LARGE SCALE MRNA]</scope>
</reference>
<dbReference type="EMBL" id="AC006424">
    <property type="protein sequence ID" value="AAF31282.1"/>
    <property type="molecule type" value="Genomic_DNA"/>
</dbReference>
<dbReference type="EMBL" id="CP002684">
    <property type="protein sequence ID" value="AEE31552.1"/>
    <property type="molecule type" value="Genomic_DNA"/>
</dbReference>
<dbReference type="EMBL" id="AY045682">
    <property type="protein sequence ID" value="AAK74040.1"/>
    <property type="molecule type" value="mRNA"/>
</dbReference>
<dbReference type="EMBL" id="AY059164">
    <property type="protein sequence ID" value="AAL15389.1"/>
    <property type="molecule type" value="mRNA"/>
</dbReference>
<dbReference type="EMBL" id="AY084346">
    <property type="protein sequence ID" value="AAM60929.1"/>
    <property type="molecule type" value="mRNA"/>
</dbReference>
<dbReference type="PIR" id="A86455">
    <property type="entry name" value="A86455"/>
</dbReference>
<dbReference type="RefSeq" id="NP_564415.1">
    <property type="nucleotide sequence ID" value="NM_103037.4"/>
</dbReference>
<dbReference type="SMR" id="Q8LGC6"/>
<dbReference type="BioGRID" id="25433">
    <property type="interactions" value="6"/>
</dbReference>
<dbReference type="FunCoup" id="Q8LGC6">
    <property type="interactions" value="3103"/>
</dbReference>
<dbReference type="IntAct" id="Q8LGC6">
    <property type="interactions" value="2"/>
</dbReference>
<dbReference type="STRING" id="3702.Q8LGC6"/>
<dbReference type="MetOSite" id="Q8LGC6"/>
<dbReference type="PaxDb" id="3702-AT1G33040.1"/>
<dbReference type="ProteomicsDB" id="251279"/>
<dbReference type="EnsemblPlants" id="AT1G33040.1">
    <property type="protein sequence ID" value="AT1G33040.1"/>
    <property type="gene ID" value="AT1G33040"/>
</dbReference>
<dbReference type="GeneID" id="840199"/>
<dbReference type="Gramene" id="AT1G33040.1">
    <property type="protein sequence ID" value="AT1G33040.1"/>
    <property type="gene ID" value="AT1G33040"/>
</dbReference>
<dbReference type="KEGG" id="ath:AT1G33040"/>
<dbReference type="Araport" id="AT1G33040"/>
<dbReference type="TAIR" id="AT1G33040">
    <property type="gene designation" value="NACA5"/>
</dbReference>
<dbReference type="eggNOG" id="KOG2239">
    <property type="taxonomic scope" value="Eukaryota"/>
</dbReference>
<dbReference type="HOGENOM" id="CLU_057806_3_0_1"/>
<dbReference type="InParanoid" id="Q8LGC6"/>
<dbReference type="OMA" id="FKMPDMA"/>
<dbReference type="PhylomeDB" id="Q8LGC6"/>
<dbReference type="CD-CODE" id="4299E36E">
    <property type="entry name" value="Nucleolus"/>
</dbReference>
<dbReference type="PRO" id="PR:Q8LGC6"/>
<dbReference type="Proteomes" id="UP000006548">
    <property type="component" value="Chromosome 1"/>
</dbReference>
<dbReference type="ExpressionAtlas" id="Q8LGC6">
    <property type="expression patterns" value="baseline and differential"/>
</dbReference>
<dbReference type="GO" id="GO:0005854">
    <property type="term" value="C:nascent polypeptide-associated complex"/>
    <property type="evidence" value="ECO:0007669"/>
    <property type="project" value="InterPro"/>
</dbReference>
<dbReference type="GO" id="GO:0005634">
    <property type="term" value="C:nucleus"/>
    <property type="evidence" value="ECO:0007005"/>
    <property type="project" value="TAIR"/>
</dbReference>
<dbReference type="GO" id="GO:0015031">
    <property type="term" value="P:protein transport"/>
    <property type="evidence" value="ECO:0007669"/>
    <property type="project" value="UniProtKB-KW"/>
</dbReference>
<dbReference type="CDD" id="cd22054">
    <property type="entry name" value="NAC_NACA"/>
    <property type="match status" value="1"/>
</dbReference>
<dbReference type="CDD" id="cd14358">
    <property type="entry name" value="UBA_NAC_euk"/>
    <property type="match status" value="1"/>
</dbReference>
<dbReference type="FunFam" id="2.20.70.30:FF:000002">
    <property type="entry name" value="Nascent polypeptide-associated complex (NAC), alpha subunit"/>
    <property type="match status" value="1"/>
</dbReference>
<dbReference type="Gene3D" id="1.10.8.10">
    <property type="entry name" value="DNA helicase RuvA subunit, C-terminal domain"/>
    <property type="match status" value="1"/>
</dbReference>
<dbReference type="Gene3D" id="2.20.70.30">
    <property type="entry name" value="Nascent polypeptide-associated complex domain"/>
    <property type="match status" value="1"/>
</dbReference>
<dbReference type="InterPro" id="IPR016641">
    <property type="entry name" value="EGD2/NACA0like"/>
</dbReference>
<dbReference type="InterPro" id="IPR044034">
    <property type="entry name" value="NAC-like_UBA"/>
</dbReference>
<dbReference type="InterPro" id="IPR038187">
    <property type="entry name" value="NAC_A/B_dom_sf"/>
</dbReference>
<dbReference type="InterPro" id="IPR002715">
    <property type="entry name" value="Nas_poly-pep-assoc_cplx_dom"/>
</dbReference>
<dbReference type="PANTHER" id="PTHR21713">
    <property type="entry name" value="NASCENT POLYPEPTIDE ASSOCIATED COMPLEX ALPHA SUBUNIT-RELATED"/>
    <property type="match status" value="1"/>
</dbReference>
<dbReference type="Pfam" id="PF01849">
    <property type="entry name" value="NAC"/>
    <property type="match status" value="1"/>
</dbReference>
<dbReference type="Pfam" id="PF19026">
    <property type="entry name" value="UBA_HYPK"/>
    <property type="match status" value="1"/>
</dbReference>
<dbReference type="SMART" id="SM01407">
    <property type="entry name" value="NAC"/>
    <property type="match status" value="1"/>
</dbReference>
<dbReference type="PROSITE" id="PS51151">
    <property type="entry name" value="NAC_AB"/>
    <property type="match status" value="1"/>
</dbReference>
<gene>
    <name type="ordered locus">At1g33040</name>
    <name type="ORF">F9L11.19</name>
</gene>
<proteinExistence type="evidence at transcript level"/>
<organism>
    <name type="scientific">Arabidopsis thaliana</name>
    <name type="common">Mouse-ear cress</name>
    <dbReference type="NCBI Taxonomy" id="3702"/>
    <lineage>
        <taxon>Eukaryota</taxon>
        <taxon>Viridiplantae</taxon>
        <taxon>Streptophyta</taxon>
        <taxon>Embryophyta</taxon>
        <taxon>Tracheophyta</taxon>
        <taxon>Spermatophyta</taxon>
        <taxon>Magnoliopsida</taxon>
        <taxon>eudicotyledons</taxon>
        <taxon>Gunneridae</taxon>
        <taxon>Pentapetalae</taxon>
        <taxon>rosids</taxon>
        <taxon>malvids</taxon>
        <taxon>Brassicales</taxon>
        <taxon>Brassicaceae</taxon>
        <taxon>Camelineae</taxon>
        <taxon>Arabidopsis</taxon>
    </lineage>
</organism>
<sequence>MPGAIVEEEKSQIESIKEQLKLEKEDDVVVEDVKDGEEEDDDEDDEDVEVEGEGGNENAKQSRSEKKSRKAVLKLGMKPVSDVSRVTIKRAKNVLFVISKPDVYKSPNAETYVIFGEAKVDDLSSQLQTQAAQRFKMPDVTSMLPNAGSEATMAPLAEEEDEDDVDDTGVEARDIDLVMTQAGVSKAKAVSALKANDGDIVSAIMELTT</sequence>
<name>NACA5_ARATH</name>
<evidence type="ECO:0000250" key="1"/>
<evidence type="ECO:0000255" key="2">
    <source>
        <dbReference type="PROSITE-ProRule" id="PRU00507"/>
    </source>
</evidence>
<evidence type="ECO:0000256" key="3">
    <source>
        <dbReference type="SAM" id="MobiDB-lite"/>
    </source>
</evidence>
<evidence type="ECO:0000305" key="4"/>